<sequence>MKTFSAKAHEVTREWYVIDATDKVLGRVASEVARRLRGKHKPEFTPHVDTGDFIIVINASKLKVTGNKTLDKKYYRHSGYPGGIYETTFGKMQERFPGRALEKAVKGMLPKGPLGYAMIKKLKVYAEATHPHSAQQPKALEI</sequence>
<dbReference type="EMBL" id="CP000570">
    <property type="protein sequence ID" value="ABN84468.1"/>
    <property type="molecule type" value="Genomic_DNA"/>
</dbReference>
<dbReference type="RefSeq" id="WP_004522094.1">
    <property type="nucleotide sequence ID" value="NC_009074.1"/>
</dbReference>
<dbReference type="SMR" id="A3NDG8"/>
<dbReference type="GeneID" id="93126851"/>
<dbReference type="KEGG" id="bpd:BURPS668_3378"/>
<dbReference type="HOGENOM" id="CLU_082184_2_2_4"/>
<dbReference type="GO" id="GO:0022625">
    <property type="term" value="C:cytosolic large ribosomal subunit"/>
    <property type="evidence" value="ECO:0007669"/>
    <property type="project" value="TreeGrafter"/>
</dbReference>
<dbReference type="GO" id="GO:0003729">
    <property type="term" value="F:mRNA binding"/>
    <property type="evidence" value="ECO:0007669"/>
    <property type="project" value="TreeGrafter"/>
</dbReference>
<dbReference type="GO" id="GO:0003735">
    <property type="term" value="F:structural constituent of ribosome"/>
    <property type="evidence" value="ECO:0007669"/>
    <property type="project" value="InterPro"/>
</dbReference>
<dbReference type="GO" id="GO:0017148">
    <property type="term" value="P:negative regulation of translation"/>
    <property type="evidence" value="ECO:0007669"/>
    <property type="project" value="TreeGrafter"/>
</dbReference>
<dbReference type="GO" id="GO:0006412">
    <property type="term" value="P:translation"/>
    <property type="evidence" value="ECO:0007669"/>
    <property type="project" value="UniProtKB-UniRule"/>
</dbReference>
<dbReference type="CDD" id="cd00392">
    <property type="entry name" value="Ribosomal_L13"/>
    <property type="match status" value="1"/>
</dbReference>
<dbReference type="FunFam" id="3.90.1180.10:FF:000001">
    <property type="entry name" value="50S ribosomal protein L13"/>
    <property type="match status" value="1"/>
</dbReference>
<dbReference type="Gene3D" id="3.90.1180.10">
    <property type="entry name" value="Ribosomal protein L13"/>
    <property type="match status" value="1"/>
</dbReference>
<dbReference type="HAMAP" id="MF_01366">
    <property type="entry name" value="Ribosomal_uL13"/>
    <property type="match status" value="1"/>
</dbReference>
<dbReference type="InterPro" id="IPR005822">
    <property type="entry name" value="Ribosomal_uL13"/>
</dbReference>
<dbReference type="InterPro" id="IPR005823">
    <property type="entry name" value="Ribosomal_uL13_bac-type"/>
</dbReference>
<dbReference type="InterPro" id="IPR036899">
    <property type="entry name" value="Ribosomal_uL13_sf"/>
</dbReference>
<dbReference type="NCBIfam" id="TIGR01066">
    <property type="entry name" value="rplM_bact"/>
    <property type="match status" value="1"/>
</dbReference>
<dbReference type="PANTHER" id="PTHR11545:SF2">
    <property type="entry name" value="LARGE RIBOSOMAL SUBUNIT PROTEIN UL13M"/>
    <property type="match status" value="1"/>
</dbReference>
<dbReference type="PANTHER" id="PTHR11545">
    <property type="entry name" value="RIBOSOMAL PROTEIN L13"/>
    <property type="match status" value="1"/>
</dbReference>
<dbReference type="Pfam" id="PF00572">
    <property type="entry name" value="Ribosomal_L13"/>
    <property type="match status" value="1"/>
</dbReference>
<dbReference type="PIRSF" id="PIRSF002181">
    <property type="entry name" value="Ribosomal_L13"/>
    <property type="match status" value="1"/>
</dbReference>
<dbReference type="SUPFAM" id="SSF52161">
    <property type="entry name" value="Ribosomal protein L13"/>
    <property type="match status" value="1"/>
</dbReference>
<evidence type="ECO:0000255" key="1">
    <source>
        <dbReference type="HAMAP-Rule" id="MF_01366"/>
    </source>
</evidence>
<evidence type="ECO:0000305" key="2"/>
<keyword id="KW-0687">Ribonucleoprotein</keyword>
<keyword id="KW-0689">Ribosomal protein</keyword>
<feature type="chain" id="PRO_1000055359" description="Large ribosomal subunit protein uL13">
    <location>
        <begin position="1"/>
        <end position="142"/>
    </location>
</feature>
<proteinExistence type="inferred from homology"/>
<gene>
    <name evidence="1" type="primary">rplM</name>
    <name type="ordered locus">BURPS668_3378</name>
</gene>
<reference key="1">
    <citation type="journal article" date="2010" name="Genome Biol. Evol.">
        <title>Continuing evolution of Burkholderia mallei through genome reduction and large-scale rearrangements.</title>
        <authorList>
            <person name="Losada L."/>
            <person name="Ronning C.M."/>
            <person name="DeShazer D."/>
            <person name="Woods D."/>
            <person name="Fedorova N."/>
            <person name="Kim H.S."/>
            <person name="Shabalina S.A."/>
            <person name="Pearson T.R."/>
            <person name="Brinkac L."/>
            <person name="Tan P."/>
            <person name="Nandi T."/>
            <person name="Crabtree J."/>
            <person name="Badger J."/>
            <person name="Beckstrom-Sternberg S."/>
            <person name="Saqib M."/>
            <person name="Schutzer S.E."/>
            <person name="Keim P."/>
            <person name="Nierman W.C."/>
        </authorList>
    </citation>
    <scope>NUCLEOTIDE SEQUENCE [LARGE SCALE GENOMIC DNA]</scope>
    <source>
        <strain>668</strain>
    </source>
</reference>
<comment type="function">
    <text evidence="1">This protein is one of the early assembly proteins of the 50S ribosomal subunit, although it is not seen to bind rRNA by itself. It is important during the early stages of 50S assembly.</text>
</comment>
<comment type="subunit">
    <text evidence="1">Part of the 50S ribosomal subunit.</text>
</comment>
<comment type="similarity">
    <text evidence="1">Belongs to the universal ribosomal protein uL13 family.</text>
</comment>
<protein>
    <recommendedName>
        <fullName evidence="1">Large ribosomal subunit protein uL13</fullName>
    </recommendedName>
    <alternativeName>
        <fullName evidence="2">50S ribosomal protein L13</fullName>
    </alternativeName>
</protein>
<organism>
    <name type="scientific">Burkholderia pseudomallei (strain 668)</name>
    <dbReference type="NCBI Taxonomy" id="320373"/>
    <lineage>
        <taxon>Bacteria</taxon>
        <taxon>Pseudomonadati</taxon>
        <taxon>Pseudomonadota</taxon>
        <taxon>Betaproteobacteria</taxon>
        <taxon>Burkholderiales</taxon>
        <taxon>Burkholderiaceae</taxon>
        <taxon>Burkholderia</taxon>
        <taxon>pseudomallei group</taxon>
    </lineage>
</organism>
<name>RL13_BURP6</name>
<accession>A3NDG8</accession>